<gene>
    <name type="primary">PIP2-4</name>
    <name type="ordered locus">At5g60660</name>
    <name type="ORF">MUP24.9</name>
</gene>
<dbReference type="EMBL" id="AB005246">
    <property type="protein sequence ID" value="BAB09839.1"/>
    <property type="molecule type" value="Genomic_DNA"/>
</dbReference>
<dbReference type="EMBL" id="CP002688">
    <property type="protein sequence ID" value="AED97364.1"/>
    <property type="molecule type" value="Genomic_DNA"/>
</dbReference>
<dbReference type="EMBL" id="AK228720">
    <property type="protein sequence ID" value="BAF00622.1"/>
    <property type="molecule type" value="mRNA"/>
</dbReference>
<dbReference type="EMBL" id="AY087245">
    <property type="protein sequence ID" value="AAM64801.1"/>
    <property type="molecule type" value="mRNA"/>
</dbReference>
<dbReference type="RefSeq" id="NP_200874.1">
    <property type="nucleotide sequence ID" value="NM_125459.4"/>
</dbReference>
<dbReference type="PDB" id="6QIM">
    <property type="method" value="X-ray"/>
    <property type="resolution" value="3.70 A"/>
    <property type="chains" value="A/B=29-279"/>
</dbReference>
<dbReference type="PDBsum" id="6QIM"/>
<dbReference type="SMR" id="Q9FF53"/>
<dbReference type="BioGRID" id="21431">
    <property type="interactions" value="7"/>
</dbReference>
<dbReference type="FunCoup" id="Q9FF53">
    <property type="interactions" value="265"/>
</dbReference>
<dbReference type="IntAct" id="Q9FF53">
    <property type="interactions" value="1"/>
</dbReference>
<dbReference type="STRING" id="3702.Q9FF53"/>
<dbReference type="TCDB" id="1.A.8.11.10">
    <property type="family name" value="the major intrinsic protein (mip) family"/>
</dbReference>
<dbReference type="GlyGen" id="Q9FF53">
    <property type="glycosylation" value="1 site"/>
</dbReference>
<dbReference type="iPTMnet" id="Q9FF53"/>
<dbReference type="PaxDb" id="3702-AT5G60660.1"/>
<dbReference type="ProteomicsDB" id="234758"/>
<dbReference type="EnsemblPlants" id="AT5G60660.1">
    <property type="protein sequence ID" value="AT5G60660.1"/>
    <property type="gene ID" value="AT5G60660"/>
</dbReference>
<dbReference type="GeneID" id="836187"/>
<dbReference type="Gramene" id="AT5G60660.1">
    <property type="protein sequence ID" value="AT5G60660.1"/>
    <property type="gene ID" value="AT5G60660"/>
</dbReference>
<dbReference type="KEGG" id="ath:AT5G60660"/>
<dbReference type="Araport" id="AT5G60660"/>
<dbReference type="TAIR" id="AT5G60660">
    <property type="gene designation" value="PIP2"/>
</dbReference>
<dbReference type="eggNOG" id="KOG0223">
    <property type="taxonomic scope" value="Eukaryota"/>
</dbReference>
<dbReference type="HOGENOM" id="CLU_020019_3_0_1"/>
<dbReference type="InParanoid" id="Q9FF53"/>
<dbReference type="OMA" id="FTARDYH"/>
<dbReference type="OrthoDB" id="3222at2759"/>
<dbReference type="PhylomeDB" id="Q9FF53"/>
<dbReference type="PRO" id="PR:Q9FF53"/>
<dbReference type="Proteomes" id="UP000006548">
    <property type="component" value="Chromosome 5"/>
</dbReference>
<dbReference type="ExpressionAtlas" id="Q9FF53">
    <property type="expression patterns" value="baseline and differential"/>
</dbReference>
<dbReference type="GO" id="GO:0005886">
    <property type="term" value="C:plasma membrane"/>
    <property type="evidence" value="ECO:0007669"/>
    <property type="project" value="UniProtKB-SubCell"/>
</dbReference>
<dbReference type="GO" id="GO:0009506">
    <property type="term" value="C:plasmodesma"/>
    <property type="evidence" value="ECO:0007005"/>
    <property type="project" value="TAIR"/>
</dbReference>
<dbReference type="GO" id="GO:0015250">
    <property type="term" value="F:water channel activity"/>
    <property type="evidence" value="ECO:0000250"/>
    <property type="project" value="TAIR"/>
</dbReference>
<dbReference type="GO" id="GO:0080170">
    <property type="term" value="P:hydrogen peroxide transmembrane transport"/>
    <property type="evidence" value="ECO:0000314"/>
    <property type="project" value="TAIR"/>
</dbReference>
<dbReference type="GO" id="GO:0048767">
    <property type="term" value="P:root hair elongation"/>
    <property type="evidence" value="ECO:0000315"/>
    <property type="project" value="TAIR"/>
</dbReference>
<dbReference type="CDD" id="cd00333">
    <property type="entry name" value="MIP"/>
    <property type="match status" value="1"/>
</dbReference>
<dbReference type="FunFam" id="1.20.1080.10:FF:000001">
    <property type="entry name" value="Probable aquaporin PIP1-2"/>
    <property type="match status" value="1"/>
</dbReference>
<dbReference type="Gene3D" id="1.20.1080.10">
    <property type="entry name" value="Glycerol uptake facilitator protein"/>
    <property type="match status" value="1"/>
</dbReference>
<dbReference type="InterPro" id="IPR023271">
    <property type="entry name" value="Aquaporin-like"/>
</dbReference>
<dbReference type="InterPro" id="IPR034294">
    <property type="entry name" value="Aquaporin_transptr"/>
</dbReference>
<dbReference type="InterPro" id="IPR000425">
    <property type="entry name" value="MIP"/>
</dbReference>
<dbReference type="InterPro" id="IPR022357">
    <property type="entry name" value="MIP_CS"/>
</dbReference>
<dbReference type="NCBIfam" id="TIGR00861">
    <property type="entry name" value="MIP"/>
    <property type="match status" value="1"/>
</dbReference>
<dbReference type="PANTHER" id="PTHR45687">
    <property type="entry name" value="AQUAPORIN OR AQUAGLYCEROPORIN RELATED"/>
    <property type="match status" value="1"/>
</dbReference>
<dbReference type="Pfam" id="PF00230">
    <property type="entry name" value="MIP"/>
    <property type="match status" value="1"/>
</dbReference>
<dbReference type="PRINTS" id="PR00783">
    <property type="entry name" value="MINTRINSICP"/>
</dbReference>
<dbReference type="SUPFAM" id="SSF81338">
    <property type="entry name" value="Aquaporin-like"/>
    <property type="match status" value="1"/>
</dbReference>
<dbReference type="PROSITE" id="PS00221">
    <property type="entry name" value="MIP"/>
    <property type="match status" value="1"/>
</dbReference>
<protein>
    <recommendedName>
        <fullName>Probable aquaporin PIP2-4</fullName>
    </recommendedName>
    <alternativeName>
        <fullName>Plasma membrane intrinsic protein 2.4</fullName>
        <shortName>AtPIP2;4</shortName>
    </alternativeName>
    <component>
        <recommendedName>
            <fullName>Probable aquaporin PIP2-4, N-terminally processed</fullName>
        </recommendedName>
    </component>
</protein>
<evidence type="ECO:0000250" key="1"/>
<evidence type="ECO:0000250" key="2">
    <source>
        <dbReference type="UniProtKB" id="P43286"/>
    </source>
</evidence>
<evidence type="ECO:0000250" key="3">
    <source>
        <dbReference type="UniProtKB" id="P61837"/>
    </source>
</evidence>
<evidence type="ECO:0000250" key="4">
    <source>
        <dbReference type="UniProtKB" id="Q41951"/>
    </source>
</evidence>
<evidence type="ECO:0000255" key="5"/>
<evidence type="ECO:0000256" key="6">
    <source>
        <dbReference type="SAM" id="MobiDB-lite"/>
    </source>
</evidence>
<evidence type="ECO:0000269" key="7">
    <source>
    </source>
</evidence>
<evidence type="ECO:0000305" key="8"/>
<evidence type="ECO:0007744" key="9">
    <source>
    </source>
</evidence>
<accession>Q9FF53</accession>
<accession>Q0WQH7</accession>
<name>PIP24_ARATH</name>
<comment type="function">
    <text evidence="1">Aquaporins facilitate the transport of water and small neutral solutes across cell membranes.</text>
</comment>
<comment type="subcellular location">
    <subcellularLocation>
        <location evidence="1">Cell membrane</location>
        <topology evidence="1">Multi-pass membrane protein</topology>
    </subcellularLocation>
</comment>
<comment type="tissue specificity">
    <text evidence="7">Expressed in roots.</text>
</comment>
<comment type="domain">
    <text evidence="1">The Asn-Pro-Ala (NPA) motifs may contribute to the formation of two hemipores that could generate a narrow channel.</text>
</comment>
<comment type="similarity">
    <text evidence="8">Belongs to the MIP/aquaporin (TC 1.A.8) family. PIP (TC 1.A.8.11) subfamily.</text>
</comment>
<sequence>MAKDLDVNESGPPAARDYKDPPPAPFFDMEELRKWPLYRAVIAEFVATLLFLYVSILTVIGYKAQTDATAGGVDCGGVGILGIAWAFGGMIFVLVYCTAGISGGHINPAVTVGLFLARKVSLVRTVLYIVAQCLGAICGCGFVKAFQSSYYTRYGGGANELADGYNKGTGLGAEIIGTFVLVYTVFSATDPKRNARDSHVPVLAPLPIGFAVFMVHLATIPITGTGINPARSFGAAVIYNNEKAWDDQWIFWVGPMIGAAAAAFYHQFILRAAAIKALGSFGSFGSFRSFA</sequence>
<proteinExistence type="evidence at protein level"/>
<keyword id="KW-0002">3D-structure</keyword>
<keyword id="KW-0007">Acetylation</keyword>
<keyword id="KW-1003">Cell membrane</keyword>
<keyword id="KW-0472">Membrane</keyword>
<keyword id="KW-0488">Methylation</keyword>
<keyword id="KW-0597">Phosphoprotein</keyword>
<keyword id="KW-1185">Reference proteome</keyword>
<keyword id="KW-0677">Repeat</keyword>
<keyword id="KW-0812">Transmembrane</keyword>
<keyword id="KW-1133">Transmembrane helix</keyword>
<keyword id="KW-0813">Transport</keyword>
<reference key="1">
    <citation type="journal article" date="1997" name="DNA Res.">
        <title>Structural analysis of Arabidopsis thaliana chromosome 5. I. Sequence features of the 1.6 Mb regions covered by twenty physically assigned P1 clones.</title>
        <authorList>
            <person name="Sato S."/>
            <person name="Kotani H."/>
            <person name="Nakamura Y."/>
            <person name="Kaneko T."/>
            <person name="Asamizu E."/>
            <person name="Fukami M."/>
            <person name="Miyajima N."/>
            <person name="Tabata S."/>
        </authorList>
    </citation>
    <scope>NUCLEOTIDE SEQUENCE [LARGE SCALE GENOMIC DNA]</scope>
    <source>
        <strain>cv. Columbia</strain>
    </source>
</reference>
<reference key="2">
    <citation type="journal article" date="2017" name="Plant J.">
        <title>Araport11: a complete reannotation of the Arabidopsis thaliana reference genome.</title>
        <authorList>
            <person name="Cheng C.Y."/>
            <person name="Krishnakumar V."/>
            <person name="Chan A.P."/>
            <person name="Thibaud-Nissen F."/>
            <person name="Schobel S."/>
            <person name="Town C.D."/>
        </authorList>
    </citation>
    <scope>GENOME REANNOTATION</scope>
    <source>
        <strain>cv. Columbia</strain>
    </source>
</reference>
<reference key="3">
    <citation type="submission" date="2006-07" db="EMBL/GenBank/DDBJ databases">
        <title>Large-scale analysis of RIKEN Arabidopsis full-length (RAFL) cDNAs.</title>
        <authorList>
            <person name="Totoki Y."/>
            <person name="Seki M."/>
            <person name="Ishida J."/>
            <person name="Nakajima M."/>
            <person name="Enju A."/>
            <person name="Kamiya A."/>
            <person name="Narusaka M."/>
            <person name="Shin-i T."/>
            <person name="Nakagawa M."/>
            <person name="Sakamoto N."/>
            <person name="Oishi K."/>
            <person name="Kohara Y."/>
            <person name="Kobayashi M."/>
            <person name="Toyoda A."/>
            <person name="Sakaki Y."/>
            <person name="Sakurai T."/>
            <person name="Iida K."/>
            <person name="Akiyama K."/>
            <person name="Satou M."/>
            <person name="Toyoda T."/>
            <person name="Konagaya A."/>
            <person name="Carninci P."/>
            <person name="Kawai J."/>
            <person name="Hayashizaki Y."/>
            <person name="Shinozaki K."/>
        </authorList>
    </citation>
    <scope>NUCLEOTIDE SEQUENCE [LARGE SCALE MRNA]</scope>
    <source>
        <strain>cv. Columbia</strain>
    </source>
</reference>
<reference key="4">
    <citation type="submission" date="2002-03" db="EMBL/GenBank/DDBJ databases">
        <title>Full-length cDNA from Arabidopsis thaliana.</title>
        <authorList>
            <person name="Brover V.V."/>
            <person name="Troukhan M.E."/>
            <person name="Alexandrov N.A."/>
            <person name="Lu Y.-P."/>
            <person name="Flavell R.B."/>
            <person name="Feldmann K.A."/>
        </authorList>
    </citation>
    <scope>NUCLEOTIDE SEQUENCE [LARGE SCALE MRNA]</scope>
</reference>
<reference key="5">
    <citation type="journal article" date="2003" name="Plant Cell">
        <title>Role of a single aquaporin isoform in root water uptake.</title>
        <authorList>
            <person name="Javot H."/>
            <person name="Lauvergeat V."/>
            <person name="Santoni V."/>
            <person name="Martin-Laurent F."/>
            <person name="Gueclue J."/>
            <person name="Vinh J."/>
            <person name="Heyes J."/>
            <person name="Franck K.I."/>
            <person name="Schaeffner A.R."/>
            <person name="Bouchez D."/>
            <person name="Maurel C."/>
        </authorList>
    </citation>
    <scope>IDENTIFICATION BY MASS SPECTROMETRY</scope>
</reference>
<reference key="6">
    <citation type="journal article" date="2002" name="Genome Biol.">
        <title>From genome to function: the Arabidopsis aquaporins.</title>
        <authorList>
            <person name="Quigley F."/>
            <person name="Rosenberg J.M."/>
            <person name="Shachar-Hill Y."/>
            <person name="Bohnert H.J."/>
        </authorList>
    </citation>
    <scope>NOMENCLATURE</scope>
    <scope>TISSUE SPECIFICITY</scope>
</reference>
<reference key="7">
    <citation type="journal article" date="2009" name="J. Proteomics">
        <title>Phosphoproteomic analysis of nuclei-enriched fractions from Arabidopsis thaliana.</title>
        <authorList>
            <person name="Jones A.M.E."/>
            <person name="MacLean D."/>
            <person name="Studholme D.J."/>
            <person name="Serna-Sanz A."/>
            <person name="Andreasson E."/>
            <person name="Rathjen J.P."/>
            <person name="Peck S.C."/>
        </authorList>
    </citation>
    <scope>PHOSPHORYLATION [LARGE SCALE ANALYSIS] AT SER-283 AND SER-286</scope>
    <scope>IDENTIFICATION BY MASS SPECTROMETRY [LARGE SCALE ANALYSIS]</scope>
    <source>
        <strain>cv. Columbia</strain>
    </source>
</reference>
<organism>
    <name type="scientific">Arabidopsis thaliana</name>
    <name type="common">Mouse-ear cress</name>
    <dbReference type="NCBI Taxonomy" id="3702"/>
    <lineage>
        <taxon>Eukaryota</taxon>
        <taxon>Viridiplantae</taxon>
        <taxon>Streptophyta</taxon>
        <taxon>Embryophyta</taxon>
        <taxon>Tracheophyta</taxon>
        <taxon>Spermatophyta</taxon>
        <taxon>Magnoliopsida</taxon>
        <taxon>eudicotyledons</taxon>
        <taxon>Gunneridae</taxon>
        <taxon>Pentapetalae</taxon>
        <taxon>rosids</taxon>
        <taxon>malvids</taxon>
        <taxon>Brassicales</taxon>
        <taxon>Brassicaceae</taxon>
        <taxon>Camelineae</taxon>
        <taxon>Arabidopsis</taxon>
    </lineage>
</organism>
<feature type="chain" id="PRO_0000425769" description="Probable aquaporin PIP2-4">
    <location>
        <begin position="1"/>
        <end position="291"/>
    </location>
</feature>
<feature type="initiator methionine" description="Removed; alternate" evidence="4">
    <location>
        <position position="1"/>
    </location>
</feature>
<feature type="chain" id="PRO_0000064054" description="Probable aquaporin PIP2-4, N-terminally processed">
    <location>
        <begin position="2"/>
        <end position="291"/>
    </location>
</feature>
<feature type="topological domain" description="Cytoplasmic" evidence="5">
    <location>
        <begin position="2"/>
        <end position="39"/>
    </location>
</feature>
<feature type="transmembrane region" description="Helical; Name=1" evidence="5">
    <location>
        <begin position="40"/>
        <end position="60"/>
    </location>
</feature>
<feature type="topological domain" description="Extracellular" evidence="5">
    <location>
        <begin position="61"/>
        <end position="74"/>
    </location>
</feature>
<feature type="transmembrane region" description="Helical; Name=2" evidence="5">
    <location>
        <begin position="75"/>
        <end position="95"/>
    </location>
</feature>
<feature type="topological domain" description="Cytoplasmic" evidence="5">
    <location>
        <begin position="96"/>
        <end position="125"/>
    </location>
</feature>
<feature type="transmembrane region" description="Helical; Name=3" evidence="5">
    <location>
        <begin position="126"/>
        <end position="146"/>
    </location>
</feature>
<feature type="topological domain" description="Extracellular" evidence="5">
    <location>
        <begin position="147"/>
        <end position="167"/>
    </location>
</feature>
<feature type="transmembrane region" description="Helical; Name=4" evidence="5">
    <location>
        <begin position="168"/>
        <end position="188"/>
    </location>
</feature>
<feature type="topological domain" description="Cytoplasmic" evidence="5">
    <location>
        <begin position="189"/>
        <end position="201"/>
    </location>
</feature>
<feature type="transmembrane region" description="Helical; Name=5" evidence="5">
    <location>
        <begin position="202"/>
        <end position="222"/>
    </location>
</feature>
<feature type="topological domain" description="Extracellular" evidence="5">
    <location>
        <begin position="223"/>
        <end position="249"/>
    </location>
</feature>
<feature type="transmembrane region" description="Helical; Name=6" evidence="5">
    <location>
        <begin position="250"/>
        <end position="270"/>
    </location>
</feature>
<feature type="topological domain" description="Cytoplasmic" evidence="5">
    <location>
        <begin position="271"/>
        <end position="291"/>
    </location>
</feature>
<feature type="region of interest" description="Disordered" evidence="6">
    <location>
        <begin position="1"/>
        <end position="22"/>
    </location>
</feature>
<feature type="short sequence motif" description="NPA 1">
    <location>
        <begin position="107"/>
        <end position="109"/>
    </location>
</feature>
<feature type="short sequence motif" description="NPA 2">
    <location>
        <begin position="228"/>
        <end position="230"/>
    </location>
</feature>
<feature type="modified residue" description="N-acetylmethionine" evidence="3">
    <location>
        <position position="1"/>
    </location>
</feature>
<feature type="modified residue" description="N-acetylalanine; in Probable aquaporin PIP2-4, N-terminally processed" evidence="4">
    <location>
        <position position="2"/>
    </location>
</feature>
<feature type="modified residue" description="N6,N6-dimethyllysine" evidence="2">
    <location>
        <position position="3"/>
    </location>
</feature>
<feature type="modified residue" description="Phosphoserine" evidence="9">
    <location>
        <position position="283"/>
    </location>
</feature>
<feature type="modified residue" description="Phosphoserine" evidence="9">
    <location>
        <position position="286"/>
    </location>
</feature>
<feature type="modified residue" description="Phosphoserine" evidence="2">
    <location>
        <position position="289"/>
    </location>
</feature>